<accession>O04893</accession>
<protein>
    <recommendedName>
        <fullName>Alpha-glucosidase</fullName>
        <ecNumber>3.2.1.20</ecNumber>
    </recommendedName>
    <alternativeName>
        <fullName>Maltase</fullName>
    </alternativeName>
</protein>
<sequence>MKKKIPSLALGILLVFLLQYLVAGISTSENDPEGVIGYGYKVKSVKVDSGTRRSLTALPQLVKNSSVYGPDIQLLSITASLESNDRLRVRITDAKHRRWEIPDNILHRHQPPPPPPHSLSSLYRTLLSSPTTNRRKILLSHPNSDLTFSLINTTPFGFTISRKSTHDVLFDATPDPTNPNTFLIFIDQYLHLTSSLPGTRAHIYGLGEHSKPTFQLAHNQTLTMRAADIPSSNPDVNLYGSHPFYMDVRSSPVAGSTHGVLLLNSNGMDVEYTGNRITYKVIGGIIDLYFFAGPSPGQVVEQFTRVIGRPAPMPYWAFGFQQCRYGYHDVYELQSVVAGYAKAKIPLEVMWTDIDYMDAYKDFTLDPVNFPLDKMKKFVNNLHKNGQKYVVILDPGISTNKTYETYIRGMKHDVFLKRNGKPYLGSVWPGPVYFPDFLKPSALTFWTDEIKRFLNLLPVDGLWIDMNEISNFISSPPIPGSTLDNPPYKINNSGVMLPIINKTIPPTAMHYGDIPEYNVHNLFGYLEARVTRAALIKLTEKRPFVLSRSTFSGSGKYTAHWTGDNAATWNDLVYSIPSMLDFGLFGIPMVGADICGFLGNTTEELCRRWIQLGAFYPFSRDHSSLGTTYQELYRWESVAASARKVLGLRYTLLPYFYTLMYEAQLNGIPIARPLFFSFPDDIKTYGISSQFLLGKGVMVSPVLKPGVVSVTAYFPRGNWFDLFDYTRSVTASTGRYVTLSAPPDHINVHIQEGNILAMQGKAMTTQAARKTPFHLLVVMSDCGASFGELFLDDGVEVTMGVNRGKWTFVKFIAASAKQTCIITSDVVSGEFAVSQKWVIDKVTILGLRKGTKINGYTVRTGAVTRKGDKSKLKSTPDRKGEFIVAEISGLNLLLGREFKLVLH</sequence>
<comment type="function">
    <text>Alpha-glucosidase I and II have high activity towards malto-oligosaccharides and starch, while form III and IV have high activity towards malto-oligosaccharides but low activity toward starch.</text>
</comment>
<comment type="catalytic activity">
    <reaction>
        <text>Hydrolysis of terminal, non-reducing (1-&gt;4)-linked alpha-D-glucose residues with release of alpha-D-glucose.</text>
        <dbReference type="EC" id="3.2.1.20"/>
    </reaction>
</comment>
<comment type="PTM">
    <text>Four different forms (I-IV) may be produced by post-translational modification.</text>
</comment>
<comment type="similarity">
    <text evidence="3">Belongs to the glycosyl hydrolase 31 family.</text>
</comment>
<feature type="signal peptide" evidence="2">
    <location>
        <begin position="1"/>
        <end position="24"/>
    </location>
</feature>
<feature type="chain" id="PRO_0000018584" description="Alpha-glucosidase">
    <location>
        <begin position="25"/>
        <end position="903"/>
    </location>
</feature>
<feature type="active site" evidence="1">
    <location>
        <position position="465"/>
    </location>
</feature>
<feature type="active site" evidence="1">
    <location>
        <position position="468"/>
    </location>
</feature>
<feature type="active site" description="Proton donor" evidence="1">
    <location>
        <position position="564"/>
    </location>
</feature>
<feature type="glycosylation site" description="N-linked (GlcNAc...) asparagine" evidence="2">
    <location>
        <position position="64"/>
    </location>
</feature>
<feature type="glycosylation site" description="N-linked (GlcNAc...) asparagine" evidence="2">
    <location>
        <position position="219"/>
    </location>
</feature>
<feature type="glycosylation site" description="N-linked (GlcNAc...) asparagine" evidence="2">
    <location>
        <position position="400"/>
    </location>
</feature>
<feature type="glycosylation site" description="N-linked (GlcNAc...) asparagine" evidence="2">
    <location>
        <position position="491"/>
    </location>
</feature>
<feature type="glycosylation site" description="N-linked (GlcNAc...) asparagine" evidence="2">
    <location>
        <position position="501"/>
    </location>
</feature>
<feature type="glycosylation site" description="N-linked (GlcNAc...) asparagine" evidence="2">
    <location>
        <position position="600"/>
    </location>
</feature>
<name>AGLU_SPIOL</name>
<dbReference type="EC" id="3.2.1.20"/>
<dbReference type="EMBL" id="D86624">
    <property type="protein sequence ID" value="BAA19924.1"/>
    <property type="molecule type" value="mRNA"/>
</dbReference>
<dbReference type="PIR" id="T09143">
    <property type="entry name" value="T09143"/>
</dbReference>
<dbReference type="SMR" id="O04893"/>
<dbReference type="CAZy" id="GH31">
    <property type="family name" value="Glycoside Hydrolase Family 31"/>
</dbReference>
<dbReference type="Proteomes" id="UP001155700">
    <property type="component" value="Unplaced"/>
</dbReference>
<dbReference type="GO" id="GO:0004558">
    <property type="term" value="F:alpha-1,4-glucosidase activity"/>
    <property type="evidence" value="ECO:0007669"/>
    <property type="project" value="UniProtKB-EC"/>
</dbReference>
<dbReference type="GO" id="GO:0030246">
    <property type="term" value="F:carbohydrate binding"/>
    <property type="evidence" value="ECO:0007669"/>
    <property type="project" value="InterPro"/>
</dbReference>
<dbReference type="GO" id="GO:0004553">
    <property type="term" value="F:hydrolase activity, hydrolyzing O-glycosyl compounds"/>
    <property type="evidence" value="ECO:0000318"/>
    <property type="project" value="GO_Central"/>
</dbReference>
<dbReference type="GO" id="GO:0005975">
    <property type="term" value="P:carbohydrate metabolic process"/>
    <property type="evidence" value="ECO:0007669"/>
    <property type="project" value="InterPro"/>
</dbReference>
<dbReference type="CDD" id="cd06602">
    <property type="entry name" value="GH31_MGAM_SI_GAA"/>
    <property type="match status" value="1"/>
</dbReference>
<dbReference type="CDD" id="cd14752">
    <property type="entry name" value="GH31_N"/>
    <property type="match status" value="1"/>
</dbReference>
<dbReference type="FunFam" id="2.60.40.1180:FF:000044">
    <property type="entry name" value="Alpha-glucosidase 1"/>
    <property type="match status" value="1"/>
</dbReference>
<dbReference type="FunFam" id="3.20.20.80:FF:000016">
    <property type="entry name" value="Maltase-glucoamylase, intestinal"/>
    <property type="match status" value="1"/>
</dbReference>
<dbReference type="Gene3D" id="3.20.20.80">
    <property type="entry name" value="Glycosidases"/>
    <property type="match status" value="1"/>
</dbReference>
<dbReference type="Gene3D" id="2.60.40.1760">
    <property type="entry name" value="glycosyl hydrolase (family 31)"/>
    <property type="match status" value="1"/>
</dbReference>
<dbReference type="Gene3D" id="2.60.40.1180">
    <property type="entry name" value="Golgi alpha-mannosidase II"/>
    <property type="match status" value="2"/>
</dbReference>
<dbReference type="InterPro" id="IPR011013">
    <property type="entry name" value="Gal_mutarotase_sf_dom"/>
</dbReference>
<dbReference type="InterPro" id="IPR030458">
    <property type="entry name" value="Glyco_hydro_31_AS"/>
</dbReference>
<dbReference type="InterPro" id="IPR048395">
    <property type="entry name" value="Glyco_hydro_31_C"/>
</dbReference>
<dbReference type="InterPro" id="IPR030459">
    <property type="entry name" value="Glyco_hydro_31_CS"/>
</dbReference>
<dbReference type="InterPro" id="IPR025887">
    <property type="entry name" value="Glyco_hydro_31_N_dom"/>
</dbReference>
<dbReference type="InterPro" id="IPR000322">
    <property type="entry name" value="Glyco_hydro_31_TIM"/>
</dbReference>
<dbReference type="InterPro" id="IPR013780">
    <property type="entry name" value="Glyco_hydro_b"/>
</dbReference>
<dbReference type="InterPro" id="IPR017853">
    <property type="entry name" value="Glycoside_hydrolase_SF"/>
</dbReference>
<dbReference type="PANTHER" id="PTHR22762">
    <property type="entry name" value="ALPHA-GLUCOSIDASE"/>
    <property type="match status" value="1"/>
</dbReference>
<dbReference type="PANTHER" id="PTHR22762:SF133">
    <property type="entry name" value="P-TYPE DOMAIN-CONTAINING PROTEIN"/>
    <property type="match status" value="1"/>
</dbReference>
<dbReference type="Pfam" id="PF13802">
    <property type="entry name" value="Gal_mutarotas_2"/>
    <property type="match status" value="1"/>
</dbReference>
<dbReference type="Pfam" id="PF01055">
    <property type="entry name" value="Glyco_hydro_31_2nd"/>
    <property type="match status" value="1"/>
</dbReference>
<dbReference type="Pfam" id="PF21365">
    <property type="entry name" value="Glyco_hydro_31_3rd"/>
    <property type="match status" value="1"/>
</dbReference>
<dbReference type="SUPFAM" id="SSF51445">
    <property type="entry name" value="(Trans)glycosidases"/>
    <property type="match status" value="1"/>
</dbReference>
<dbReference type="SUPFAM" id="SSF74650">
    <property type="entry name" value="Galactose mutarotase-like"/>
    <property type="match status" value="1"/>
</dbReference>
<dbReference type="SUPFAM" id="SSF51011">
    <property type="entry name" value="Glycosyl hydrolase domain"/>
    <property type="match status" value="1"/>
</dbReference>
<dbReference type="PROSITE" id="PS00129">
    <property type="entry name" value="GLYCOSYL_HYDROL_F31_1"/>
    <property type="match status" value="1"/>
</dbReference>
<dbReference type="PROSITE" id="PS00707">
    <property type="entry name" value="GLYCOSYL_HYDROL_F31_2"/>
    <property type="match status" value="1"/>
</dbReference>
<proteinExistence type="evidence at protein level"/>
<keyword id="KW-0903">Direct protein sequencing</keyword>
<keyword id="KW-0325">Glycoprotein</keyword>
<keyword id="KW-0326">Glycosidase</keyword>
<keyword id="KW-0378">Hydrolase</keyword>
<keyword id="KW-1185">Reference proteome</keyword>
<keyword id="KW-0732">Signal</keyword>
<evidence type="ECO:0000250" key="1"/>
<evidence type="ECO:0000255" key="2"/>
<evidence type="ECO:0000305" key="3"/>
<reference key="1">
    <citation type="journal article" date="1997" name="Plant Mol. Biol.">
        <title>Molecular cloning and characterization of a cDNA encoding alpha-glucosidase from spinach.</title>
        <authorList>
            <person name="Sugimoto M."/>
            <person name="Furui S."/>
            <person name="Suzuki Y."/>
        </authorList>
    </citation>
    <scope>NUCLEOTIDE SEQUENCE [MRNA]</scope>
    <scope>PARTIAL PROTEIN SEQUENCE</scope>
    <source>
        <strain>cv. Dash</strain>
    </source>
</reference>
<organism>
    <name type="scientific">Spinacia oleracea</name>
    <name type="common">Spinach</name>
    <dbReference type="NCBI Taxonomy" id="3562"/>
    <lineage>
        <taxon>Eukaryota</taxon>
        <taxon>Viridiplantae</taxon>
        <taxon>Streptophyta</taxon>
        <taxon>Embryophyta</taxon>
        <taxon>Tracheophyta</taxon>
        <taxon>Spermatophyta</taxon>
        <taxon>Magnoliopsida</taxon>
        <taxon>eudicotyledons</taxon>
        <taxon>Gunneridae</taxon>
        <taxon>Pentapetalae</taxon>
        <taxon>Caryophyllales</taxon>
        <taxon>Chenopodiaceae</taxon>
        <taxon>Chenopodioideae</taxon>
        <taxon>Anserineae</taxon>
        <taxon>Spinacia</taxon>
    </lineage>
</organism>